<gene>
    <name type="primary">FGF5</name>
</gene>
<keyword id="KW-0025">Alternative splicing</keyword>
<keyword id="KW-0225">Disease variant</keyword>
<keyword id="KW-0325">Glycoprotein</keyword>
<keyword id="KW-0339">Growth factor</keyword>
<keyword id="KW-0497">Mitogen</keyword>
<keyword id="KW-1267">Proteomics identification</keyword>
<keyword id="KW-0656">Proto-oncogene</keyword>
<keyword id="KW-1185">Reference proteome</keyword>
<keyword id="KW-0964">Secreted</keyword>
<keyword id="KW-0732">Signal</keyword>
<comment type="function">
    <text evidence="1 5">Plays an important role in the regulation of cell proliferation and cell differentiation. Required for normal regulation of the hair growth cycle. Functions as an inhibitor of hair elongation by promoting progression from anagen, the growth phase of the hair follicle, into catagen the apoptosis-induced regression phase (By similarity).</text>
</comment>
<comment type="subunit">
    <text evidence="5">Interacts with FGFR1 and FGFR2. Affinity between fibroblast growth factors (FGFs) and their receptors is increased by heparan sulfate glycosaminoglycans that function as coreceptors.</text>
</comment>
<comment type="subcellular location">
    <subcellularLocation>
        <location evidence="10">Secreted</location>
    </subcellularLocation>
</comment>
<comment type="alternative products">
    <event type="alternative splicing"/>
    <isoform>
        <id>P12034-1</id>
        <name>Long</name>
        <sequence type="displayed"/>
    </isoform>
    <isoform>
        <id>P12034-2</id>
        <name>Short</name>
        <name>FGF-5S</name>
        <sequence type="described" ref="VSP_001518 VSP_001519"/>
    </isoform>
</comment>
<comment type="tissue specificity">
    <text>Expressed in neonatal brain.</text>
</comment>
<comment type="developmental stage">
    <text>Can transform NIH 3T3 cells.</text>
</comment>
<comment type="disease" evidence="4">
    <disease id="DI-04213">
        <name>Trichomegaly</name>
        <acronym>TCMGLY</acronym>
        <description>A morphologic trait characterized by unusually long eyelashes and mild hypertrichosis of eyebrows. It can be observed in association with corneal irritation, cataracts, and hereditary spherocytosis.</description>
        <dbReference type="MIM" id="190330"/>
    </disease>
    <text>The disease is caused by variants affecting the gene represented in this entry.</text>
</comment>
<comment type="miscellaneous">
    <molecule>Isoform Short</molecule>
    <text evidence="10">Seems to have an antagonistic effect compared to that of the isoform Long.</text>
</comment>
<comment type="similarity">
    <text evidence="10">Belongs to the heparin-binding growth factors family.</text>
</comment>
<comment type="sequence caution" evidence="10">
    <conflict type="erroneous gene model prediction">
        <sequence resource="EMBL-CDS" id="AAB60698"/>
    </conflict>
</comment>
<dbReference type="EMBL" id="M37825">
    <property type="protein sequence ID" value="AAB06463.1"/>
    <property type="molecule type" value="mRNA"/>
</dbReference>
<dbReference type="EMBL" id="M23536">
    <property type="protein sequence ID" value="AAB60699.1"/>
    <property type="molecule type" value="Genomic_DNA"/>
</dbReference>
<dbReference type="EMBL" id="M23534">
    <property type="protein sequence ID" value="AAB60699.1"/>
    <property type="status" value="JOINED"/>
    <property type="molecule type" value="Genomic_DNA"/>
</dbReference>
<dbReference type="EMBL" id="M23535">
    <property type="protein sequence ID" value="AAB60699.1"/>
    <property type="status" value="JOINED"/>
    <property type="molecule type" value="Genomic_DNA"/>
</dbReference>
<dbReference type="EMBL" id="M23534">
    <property type="protein sequence ID" value="AAB60698.1"/>
    <property type="status" value="ALT_SEQ"/>
    <property type="molecule type" value="Genomic_DNA"/>
</dbReference>
<dbReference type="EMBL" id="AB016517">
    <property type="protein sequence ID" value="BAA33738.1"/>
    <property type="molecule type" value="mRNA"/>
</dbReference>
<dbReference type="EMBL" id="AF171928">
    <property type="protein sequence ID" value="AAF89742.1"/>
    <property type="molecule type" value="mRNA"/>
</dbReference>
<dbReference type="EMBL" id="AF535149">
    <property type="protein sequence ID" value="AAN04097.1"/>
    <property type="molecule type" value="mRNA"/>
</dbReference>
<dbReference type="EMBL" id="DQ151636">
    <property type="protein sequence ID" value="AAZ67914.1"/>
    <property type="molecule type" value="Genomic_DNA"/>
</dbReference>
<dbReference type="EMBL" id="AK291962">
    <property type="protein sequence ID" value="BAF84651.1"/>
    <property type="molecule type" value="mRNA"/>
</dbReference>
<dbReference type="EMBL" id="AK312065">
    <property type="protein sequence ID" value="BAG35001.1"/>
    <property type="molecule type" value="mRNA"/>
</dbReference>
<dbReference type="EMBL" id="CH471057">
    <property type="protein sequence ID" value="EAX05859.1"/>
    <property type="molecule type" value="Genomic_DNA"/>
</dbReference>
<dbReference type="EMBL" id="CH471057">
    <property type="protein sequence ID" value="EAX05860.1"/>
    <property type="molecule type" value="Genomic_DNA"/>
</dbReference>
<dbReference type="EMBL" id="BC074858">
    <property type="protein sequence ID" value="AAH74858.1"/>
    <property type="molecule type" value="mRNA"/>
</dbReference>
<dbReference type="EMBL" id="BC074859">
    <property type="protein sequence ID" value="AAH74859.1"/>
    <property type="molecule type" value="mRNA"/>
</dbReference>
<dbReference type="EMBL" id="BC131502">
    <property type="protein sequence ID" value="AAI31503.1"/>
    <property type="molecule type" value="mRNA"/>
</dbReference>
<dbReference type="CCDS" id="CCDS34021.1">
    <molecule id="P12034-1"/>
</dbReference>
<dbReference type="CCDS" id="CCDS3586.1">
    <molecule id="P12034-2"/>
</dbReference>
<dbReference type="PIR" id="A31194">
    <property type="entry name" value="TVHUF5"/>
</dbReference>
<dbReference type="PIR" id="B31194">
    <property type="entry name" value="B31194"/>
</dbReference>
<dbReference type="RefSeq" id="NP_004455.2">
    <molecule id="P12034-1"/>
    <property type="nucleotide sequence ID" value="NM_004464.4"/>
</dbReference>
<dbReference type="RefSeq" id="NP_149134.1">
    <molecule id="P12034-2"/>
    <property type="nucleotide sequence ID" value="NM_033143.2"/>
</dbReference>
<dbReference type="SMR" id="P12034"/>
<dbReference type="BioGRID" id="108541">
    <property type="interactions" value="6"/>
</dbReference>
<dbReference type="DIP" id="DIP-4018N"/>
<dbReference type="FunCoup" id="P12034">
    <property type="interactions" value="1102"/>
</dbReference>
<dbReference type="IntAct" id="P12034">
    <property type="interactions" value="4"/>
</dbReference>
<dbReference type="STRING" id="9606.ENSP00000311697"/>
<dbReference type="GlyCosmos" id="P12034">
    <property type="glycosylation" value="1 site, No reported glycans"/>
</dbReference>
<dbReference type="GlyGen" id="P12034">
    <property type="glycosylation" value="3 sites, 1 O-linked glycan (2 sites)"/>
</dbReference>
<dbReference type="iPTMnet" id="P12034"/>
<dbReference type="PhosphoSitePlus" id="P12034"/>
<dbReference type="BioMuta" id="FGF5"/>
<dbReference type="DMDM" id="85700417"/>
<dbReference type="MassIVE" id="P12034"/>
<dbReference type="PaxDb" id="9606-ENSP00000311697"/>
<dbReference type="PeptideAtlas" id="P12034"/>
<dbReference type="ProteomicsDB" id="52818">
    <molecule id="P12034-1"/>
</dbReference>
<dbReference type="Antibodypedia" id="4148">
    <property type="antibodies" value="296 antibodies from 37 providers"/>
</dbReference>
<dbReference type="DNASU" id="2250"/>
<dbReference type="Ensembl" id="ENST00000312465.12">
    <molecule id="P12034-1"/>
    <property type="protein sequence ID" value="ENSP00000311697.7"/>
    <property type="gene ID" value="ENSG00000138675.17"/>
</dbReference>
<dbReference type="Ensembl" id="ENST00000456523.3">
    <molecule id="P12034-2"/>
    <property type="protein sequence ID" value="ENSP00000398353.3"/>
    <property type="gene ID" value="ENSG00000138675.17"/>
</dbReference>
<dbReference type="GeneID" id="2250"/>
<dbReference type="KEGG" id="hsa:2250"/>
<dbReference type="MANE-Select" id="ENST00000312465.12">
    <property type="protein sequence ID" value="ENSP00000311697.7"/>
    <property type="RefSeq nucleotide sequence ID" value="NM_004464.4"/>
    <property type="RefSeq protein sequence ID" value="NP_004455.2"/>
</dbReference>
<dbReference type="UCSC" id="uc003hmd.4">
    <molecule id="P12034-1"/>
    <property type="organism name" value="human"/>
</dbReference>
<dbReference type="AGR" id="HGNC:3683"/>
<dbReference type="CTD" id="2250"/>
<dbReference type="DisGeNET" id="2250"/>
<dbReference type="GeneCards" id="FGF5"/>
<dbReference type="HGNC" id="HGNC:3683">
    <property type="gene designation" value="FGF5"/>
</dbReference>
<dbReference type="HPA" id="ENSG00000138675">
    <property type="expression patterns" value="Tissue enhanced (brain, gallbladder, intestine)"/>
</dbReference>
<dbReference type="MalaCards" id="FGF5"/>
<dbReference type="MIM" id="165190">
    <property type="type" value="gene"/>
</dbReference>
<dbReference type="MIM" id="190330">
    <property type="type" value="phenotype"/>
</dbReference>
<dbReference type="neXtProt" id="NX_P12034"/>
<dbReference type="OpenTargets" id="ENSG00000138675"/>
<dbReference type="Orphanet" id="411788">
    <property type="disease" value="Familial isolated trichomegaly"/>
</dbReference>
<dbReference type="PharmGKB" id="PA28122"/>
<dbReference type="VEuPathDB" id="HostDB:ENSG00000138675"/>
<dbReference type="eggNOG" id="KOG3885">
    <property type="taxonomic scope" value="Eukaryota"/>
</dbReference>
<dbReference type="GeneTree" id="ENSGT00940000158449"/>
<dbReference type="HOGENOM" id="CLU_081609_7_0_1"/>
<dbReference type="InParanoid" id="P12034"/>
<dbReference type="OMA" id="AKFTEDC"/>
<dbReference type="OrthoDB" id="9947297at2759"/>
<dbReference type="PAN-GO" id="P12034">
    <property type="GO annotations" value="11 GO annotations based on evolutionary models"/>
</dbReference>
<dbReference type="PhylomeDB" id="P12034"/>
<dbReference type="TreeFam" id="TF317805"/>
<dbReference type="PathwayCommons" id="P12034"/>
<dbReference type="Reactome" id="R-HSA-109704">
    <molecule id="P12034-1"/>
    <property type="pathway name" value="PI3K Cascade"/>
</dbReference>
<dbReference type="Reactome" id="R-HSA-1257604">
    <molecule id="P12034-1"/>
    <property type="pathway name" value="PIP3 activates AKT signaling"/>
</dbReference>
<dbReference type="Reactome" id="R-HSA-1839122">
    <molecule id="P12034-1"/>
    <property type="pathway name" value="Signaling by activated point mutants of FGFR1"/>
</dbReference>
<dbReference type="Reactome" id="R-HSA-1839130">
    <molecule id="P12034-1"/>
    <property type="pathway name" value="Signaling by activated point mutants of FGFR3"/>
</dbReference>
<dbReference type="Reactome" id="R-HSA-190372">
    <molecule id="P12034-1"/>
    <property type="pathway name" value="FGFR3c ligand binding and activation"/>
</dbReference>
<dbReference type="Reactome" id="R-HSA-190373">
    <molecule id="P12034-1"/>
    <property type="pathway name" value="FGFR1c ligand binding and activation"/>
</dbReference>
<dbReference type="Reactome" id="R-HSA-190375">
    <molecule id="P12034-1"/>
    <property type="pathway name" value="FGFR2c ligand binding and activation"/>
</dbReference>
<dbReference type="Reactome" id="R-HSA-2033519">
    <molecule id="P12034-1"/>
    <property type="pathway name" value="Activated point mutants of FGFR2"/>
</dbReference>
<dbReference type="Reactome" id="R-HSA-2219530">
    <molecule id="P12034-1"/>
    <property type="pathway name" value="Constitutive Signaling by Aberrant PI3K in Cancer"/>
</dbReference>
<dbReference type="Reactome" id="R-HSA-5654219">
    <molecule id="P12034-1"/>
    <property type="pathway name" value="Phospholipase C-mediated cascade: FGFR1"/>
</dbReference>
<dbReference type="Reactome" id="R-HSA-5654221">
    <molecule id="P12034-1"/>
    <property type="pathway name" value="Phospholipase C-mediated cascade, FGFR2"/>
</dbReference>
<dbReference type="Reactome" id="R-HSA-5654227">
    <molecule id="P12034-1"/>
    <property type="pathway name" value="Phospholipase C-mediated cascade, FGFR3"/>
</dbReference>
<dbReference type="Reactome" id="R-HSA-5654687">
    <molecule id="P12034-1"/>
    <property type="pathway name" value="Downstream signaling of activated FGFR1"/>
</dbReference>
<dbReference type="Reactome" id="R-HSA-5654688">
    <molecule id="P12034-1"/>
    <property type="pathway name" value="SHC-mediated cascade:FGFR1"/>
</dbReference>
<dbReference type="Reactome" id="R-HSA-5654689">
    <molecule id="P12034-1"/>
    <property type="pathway name" value="PI-3K cascade:FGFR1"/>
</dbReference>
<dbReference type="Reactome" id="R-HSA-5654693">
    <molecule id="P12034-1"/>
    <property type="pathway name" value="FRS-mediated FGFR1 signaling"/>
</dbReference>
<dbReference type="Reactome" id="R-HSA-5654695">
    <molecule id="P12034-1"/>
    <property type="pathway name" value="PI-3K cascade:FGFR2"/>
</dbReference>
<dbReference type="Reactome" id="R-HSA-5654699">
    <molecule id="P12034-1"/>
    <property type="pathway name" value="SHC-mediated cascade:FGFR2"/>
</dbReference>
<dbReference type="Reactome" id="R-HSA-5654700">
    <molecule id="P12034-1"/>
    <property type="pathway name" value="FRS-mediated FGFR2 signaling"/>
</dbReference>
<dbReference type="Reactome" id="R-HSA-5654704">
    <molecule id="P12034-1"/>
    <property type="pathway name" value="SHC-mediated cascade:FGFR3"/>
</dbReference>
<dbReference type="Reactome" id="R-HSA-5654706">
    <molecule id="P12034-1"/>
    <property type="pathway name" value="FRS-mediated FGFR3 signaling"/>
</dbReference>
<dbReference type="Reactome" id="R-HSA-5654710">
    <molecule id="P12034-1"/>
    <property type="pathway name" value="PI-3K cascade:FGFR3"/>
</dbReference>
<dbReference type="Reactome" id="R-HSA-5654726">
    <molecule id="P12034-1"/>
    <property type="pathway name" value="Negative regulation of FGFR1 signaling"/>
</dbReference>
<dbReference type="Reactome" id="R-HSA-5654727">
    <molecule id="P12034-1"/>
    <property type="pathway name" value="Negative regulation of FGFR2 signaling"/>
</dbReference>
<dbReference type="Reactome" id="R-HSA-5654732">
    <molecule id="P12034-1"/>
    <property type="pathway name" value="Negative regulation of FGFR3 signaling"/>
</dbReference>
<dbReference type="Reactome" id="R-HSA-5655253">
    <molecule id="P12034-1"/>
    <property type="pathway name" value="Signaling by FGFR2 in disease"/>
</dbReference>
<dbReference type="Reactome" id="R-HSA-5655302">
    <molecule id="P12034-1"/>
    <property type="pathway name" value="Signaling by FGFR1 in disease"/>
</dbReference>
<dbReference type="Reactome" id="R-HSA-5655332">
    <molecule id="P12034-1"/>
    <property type="pathway name" value="Signaling by FGFR3 in disease"/>
</dbReference>
<dbReference type="Reactome" id="R-HSA-5658623">
    <molecule id="P12034-1"/>
    <property type="pathway name" value="FGFRL1 modulation of FGFR1 signaling"/>
</dbReference>
<dbReference type="Reactome" id="R-HSA-5673001">
    <molecule id="P12034-1"/>
    <property type="pathway name" value="RAF/MAP kinase cascade"/>
</dbReference>
<dbReference type="Reactome" id="R-HSA-6811558">
    <molecule id="P12034-1"/>
    <property type="pathway name" value="PI5P, PP2A and IER3 Regulate PI3K/AKT Signaling"/>
</dbReference>
<dbReference type="SignaLink" id="P12034"/>
<dbReference type="SIGNOR" id="P12034"/>
<dbReference type="BioGRID-ORCS" id="2250">
    <property type="hits" value="9 hits in 1149 CRISPR screens"/>
</dbReference>
<dbReference type="ChiTaRS" id="FGF5">
    <property type="organism name" value="human"/>
</dbReference>
<dbReference type="GeneWiki" id="FGF5"/>
<dbReference type="GenomeRNAi" id="2250"/>
<dbReference type="Pharos" id="P12034">
    <property type="development level" value="Tbio"/>
</dbReference>
<dbReference type="PRO" id="PR:P12034"/>
<dbReference type="Proteomes" id="UP000005640">
    <property type="component" value="Chromosome 4"/>
</dbReference>
<dbReference type="RNAct" id="P12034">
    <property type="molecule type" value="protein"/>
</dbReference>
<dbReference type="Bgee" id="ENSG00000138675">
    <property type="expression patterns" value="Expressed in buccal mucosa cell and 78 other cell types or tissues"/>
</dbReference>
<dbReference type="ExpressionAtlas" id="P12034">
    <property type="expression patterns" value="baseline and differential"/>
</dbReference>
<dbReference type="GO" id="GO:0005737">
    <property type="term" value="C:cytoplasm"/>
    <property type="evidence" value="ECO:0000318"/>
    <property type="project" value="GO_Central"/>
</dbReference>
<dbReference type="GO" id="GO:0005576">
    <property type="term" value="C:extracellular region"/>
    <property type="evidence" value="ECO:0000304"/>
    <property type="project" value="Reactome"/>
</dbReference>
<dbReference type="GO" id="GO:0005615">
    <property type="term" value="C:extracellular space"/>
    <property type="evidence" value="ECO:0000318"/>
    <property type="project" value="GO_Central"/>
</dbReference>
<dbReference type="GO" id="GO:0005104">
    <property type="term" value="F:fibroblast growth factor receptor binding"/>
    <property type="evidence" value="ECO:0000314"/>
    <property type="project" value="MGI"/>
</dbReference>
<dbReference type="GO" id="GO:0008083">
    <property type="term" value="F:growth factor activity"/>
    <property type="evidence" value="ECO:0000318"/>
    <property type="project" value="GO_Central"/>
</dbReference>
<dbReference type="GO" id="GO:0007267">
    <property type="term" value="P:cell-cell signaling"/>
    <property type="evidence" value="ECO:0000304"/>
    <property type="project" value="ProtInc"/>
</dbReference>
<dbReference type="GO" id="GO:0008543">
    <property type="term" value="P:fibroblast growth factor receptor signaling pathway"/>
    <property type="evidence" value="ECO:0000314"/>
    <property type="project" value="MGI"/>
</dbReference>
<dbReference type="GO" id="GO:0010001">
    <property type="term" value="P:glial cell differentiation"/>
    <property type="evidence" value="ECO:0007669"/>
    <property type="project" value="Ensembl"/>
</dbReference>
<dbReference type="GO" id="GO:0007399">
    <property type="term" value="P:nervous system development"/>
    <property type="evidence" value="ECO:0000304"/>
    <property type="project" value="ProtInc"/>
</dbReference>
<dbReference type="GO" id="GO:0022008">
    <property type="term" value="P:neurogenesis"/>
    <property type="evidence" value="ECO:0000318"/>
    <property type="project" value="GO_Central"/>
</dbReference>
<dbReference type="GO" id="GO:0051781">
    <property type="term" value="P:positive regulation of cell division"/>
    <property type="evidence" value="ECO:0007669"/>
    <property type="project" value="UniProtKB-KW"/>
</dbReference>
<dbReference type="GO" id="GO:0008284">
    <property type="term" value="P:positive regulation of cell population proliferation"/>
    <property type="evidence" value="ECO:0000314"/>
    <property type="project" value="MGI"/>
</dbReference>
<dbReference type="GO" id="GO:0043410">
    <property type="term" value="P:positive regulation of MAPK cascade"/>
    <property type="evidence" value="ECO:0000318"/>
    <property type="project" value="GO_Central"/>
</dbReference>
<dbReference type="GO" id="GO:0030334">
    <property type="term" value="P:regulation of cell migration"/>
    <property type="evidence" value="ECO:0000318"/>
    <property type="project" value="GO_Central"/>
</dbReference>
<dbReference type="GO" id="GO:0023019">
    <property type="term" value="P:signal transduction involved in regulation of gene expression"/>
    <property type="evidence" value="ECO:0007669"/>
    <property type="project" value="Ensembl"/>
</dbReference>
<dbReference type="CDD" id="cd23317">
    <property type="entry name" value="beta-trefoil_FGF5"/>
    <property type="match status" value="1"/>
</dbReference>
<dbReference type="FunFam" id="2.80.10.50:FF:000042">
    <property type="entry name" value="Fibroblast growth factor"/>
    <property type="match status" value="1"/>
</dbReference>
<dbReference type="Gene3D" id="2.80.10.50">
    <property type="match status" value="1"/>
</dbReference>
<dbReference type="InterPro" id="IPR002209">
    <property type="entry name" value="Fibroblast_GF_fam"/>
</dbReference>
<dbReference type="InterPro" id="IPR008996">
    <property type="entry name" value="IL1/FGF"/>
</dbReference>
<dbReference type="PANTHER" id="PTHR11486">
    <property type="entry name" value="FIBROBLAST GROWTH FACTOR"/>
    <property type="match status" value="1"/>
</dbReference>
<dbReference type="Pfam" id="PF00167">
    <property type="entry name" value="FGF"/>
    <property type="match status" value="1"/>
</dbReference>
<dbReference type="PRINTS" id="PR00263">
    <property type="entry name" value="HBGFFGF"/>
</dbReference>
<dbReference type="PRINTS" id="PR00262">
    <property type="entry name" value="IL1HBGF"/>
</dbReference>
<dbReference type="SMART" id="SM00442">
    <property type="entry name" value="FGF"/>
    <property type="match status" value="1"/>
</dbReference>
<dbReference type="SUPFAM" id="SSF50353">
    <property type="entry name" value="Cytokine"/>
    <property type="match status" value="1"/>
</dbReference>
<dbReference type="PROSITE" id="PS00247">
    <property type="entry name" value="HBGF_FGF"/>
    <property type="match status" value="1"/>
</dbReference>
<evidence type="ECO:0000250" key="1">
    <source>
        <dbReference type="UniProtKB" id="Q20FD0"/>
    </source>
</evidence>
<evidence type="ECO:0000255" key="2"/>
<evidence type="ECO:0000256" key="3">
    <source>
        <dbReference type="SAM" id="MobiDB-lite"/>
    </source>
</evidence>
<evidence type="ECO:0000269" key="4">
    <source>
    </source>
</evidence>
<evidence type="ECO:0000269" key="5">
    <source>
    </source>
</evidence>
<evidence type="ECO:0000269" key="6">
    <source ref="6"/>
</evidence>
<evidence type="ECO:0000303" key="7">
    <source>
    </source>
</evidence>
<evidence type="ECO:0000303" key="8">
    <source>
    </source>
</evidence>
<evidence type="ECO:0000303" key="9">
    <source ref="3"/>
</evidence>
<evidence type="ECO:0000305" key="10"/>
<proteinExistence type="evidence at protein level"/>
<protein>
    <recommendedName>
        <fullName>Fibroblast growth factor 5</fullName>
        <shortName>FGF-5</shortName>
    </recommendedName>
    <alternativeName>
        <fullName>Heparin-binding growth factor 5</fullName>
        <shortName>HBGF-5</shortName>
    </alternativeName>
    <alternativeName>
        <fullName>Smag-82</fullName>
    </alternativeName>
</protein>
<accession>P12034</accession>
<accession>B2R554</accession>
<accession>O75846</accession>
<accession>Q3Y8M3</accession>
<accession>Q8NF90</accession>
<name>FGF5_HUMAN</name>
<feature type="signal peptide" evidence="2">
    <location>
        <begin position="1"/>
        <end position="20"/>
    </location>
</feature>
<feature type="chain" id="PRO_0000008958" description="Fibroblast growth factor 5">
    <location>
        <begin position="21"/>
        <end position="268"/>
    </location>
</feature>
<feature type="region of interest" description="Disordered" evidence="3">
    <location>
        <begin position="26"/>
        <end position="81"/>
    </location>
</feature>
<feature type="region of interest" description="Disordered" evidence="3">
    <location>
        <begin position="233"/>
        <end position="255"/>
    </location>
</feature>
<feature type="compositionally biased region" description="Low complexity" evidence="3">
    <location>
        <begin position="43"/>
        <end position="80"/>
    </location>
</feature>
<feature type="glycosylation site" description="N-linked (GlcNAc...) asparagine" evidence="2">
    <location>
        <position position="110"/>
    </location>
</feature>
<feature type="splice variant" id="VSP_001518" description="In isoform Short." evidence="7 8 9">
    <original>VLEI</original>
    <variation>QVHR</variation>
    <location>
        <begin position="120"/>
        <end position="123"/>
    </location>
</feature>
<feature type="splice variant" id="VSP_001519" description="In isoform Short." evidence="7 8 9">
    <location>
        <begin position="124"/>
        <end position="268"/>
    </location>
</feature>
<feature type="sequence variant" id="VAR_025174" description="In dbSNP:rs33950145." evidence="6">
    <original>M</original>
    <variation>V</variation>
    <location>
        <position position="54"/>
    </location>
</feature>
<feature type="sequence variant" id="VAR_072566" description="In TCMGLY; dbSNP:rs587777581." evidence="4">
    <original>Y</original>
    <variation>H</variation>
    <location>
        <position position="174"/>
    </location>
</feature>
<feature type="sequence conflict" description="In Ref. 1; AAB06463." evidence="10" ref="1">
    <original>R</original>
    <variation>I</variation>
    <location>
        <position position="42"/>
    </location>
</feature>
<feature type="sequence conflict" description="In Ref. 2; AAB60699." evidence="10" ref="2">
    <original>PSGR</original>
    <variation>LGA</variation>
    <location>
        <begin position="83"/>
        <end position="86"/>
    </location>
</feature>
<feature type="sequence conflict" description="In Ref. 6; AAZ67914." evidence="10" ref="6">
    <original>Q</original>
    <variation>QQ</variation>
    <location>
        <position position="224"/>
    </location>
</feature>
<feature type="sequence conflict" description="In Ref. 1; AAB06463 and 2; AAB60699." evidence="10" ref="1 2">
    <original>K</original>
    <variation>N</variation>
    <location>
        <position position="238"/>
    </location>
</feature>
<feature type="sequence conflict" description="In Ref. 1; AAB06463 and 2; AAB60699." evidence="10" ref="1 2">
    <original>P</original>
    <variation>S</variation>
    <location>
        <position position="245"/>
    </location>
</feature>
<organism>
    <name type="scientific">Homo sapiens</name>
    <name type="common">Human</name>
    <dbReference type="NCBI Taxonomy" id="9606"/>
    <lineage>
        <taxon>Eukaryota</taxon>
        <taxon>Metazoa</taxon>
        <taxon>Chordata</taxon>
        <taxon>Craniata</taxon>
        <taxon>Vertebrata</taxon>
        <taxon>Euteleostomi</taxon>
        <taxon>Mammalia</taxon>
        <taxon>Eutheria</taxon>
        <taxon>Euarchontoglires</taxon>
        <taxon>Primates</taxon>
        <taxon>Haplorrhini</taxon>
        <taxon>Catarrhini</taxon>
        <taxon>Hominidae</taxon>
        <taxon>Homo</taxon>
    </lineage>
</organism>
<reference key="1">
    <citation type="journal article" date="1990" name="Proc. Natl. Acad. Sci. U.S.A.">
        <title>Expression of the murine fibroblast growth factor 5 gene in the adult central nervous system.</title>
        <authorList>
            <person name="Haub O."/>
            <person name="Drucker B."/>
            <person name="Goldfarb M."/>
        </authorList>
    </citation>
    <scope>NUCLEOTIDE SEQUENCE [MRNA] (ISOFORM LONG)</scope>
    <source>
        <tissue>Brain stem</tissue>
    </source>
</reference>
<reference key="2">
    <citation type="journal article" date="1988" name="Mol. Cell. Biol.">
        <title>The human FGF-5 oncogene encodes a novel protein related to fibroblast growth factors.</title>
        <authorList>
            <person name="Zhan X."/>
            <person name="Bates B."/>
            <person name="Hu X."/>
            <person name="Goldfarb M."/>
        </authorList>
    </citation>
    <scope>NUCLEOTIDE SEQUENCE [GENOMIC DNA]</scope>
</reference>
<reference key="3">
    <citation type="submission" date="1998-07" db="EMBL/GenBank/DDBJ databases">
        <title>An alternatively-spliced FGF-5 mRNA is abundant in brain and translates into a partial agonist/antagonist for FGF-5 neurotrophic activity.</title>
        <authorList>
            <person name="Ozawa K."/>
            <person name="Suzuki S."/>
            <person name="Asada M."/>
            <person name="Tomooka Y."/>
            <person name="Li A."/>
            <person name="Yoneda A."/>
            <person name="Komi A."/>
            <person name="Imamura T."/>
        </authorList>
    </citation>
    <scope>NUCLEOTIDE SEQUENCE [MRNA] (ISOFORM SHORT)</scope>
</reference>
<reference key="4">
    <citation type="journal article" date="2000" name="J. Biol. Chem.">
        <title>Differential display identification of 40 genes with altered expression in activated human smooth muscle cells. Local expression in atherosclerotic lesions of smags, smooth muscle activation-specific genes.</title>
        <authorList>
            <person name="de Vries C.J.M."/>
            <person name="van Achterberg T.A.E."/>
            <person name="Horrevoets A.J.G."/>
            <person name="ten Cate J.W."/>
            <person name="Pannekoek H."/>
        </authorList>
    </citation>
    <scope>NUCLEOTIDE SEQUENCE [MRNA] (ISOFORM SHORT)</scope>
    <source>
        <tissue>Umbilical artery</tissue>
    </source>
</reference>
<reference key="5">
    <citation type="journal article" date="2001" name="Cancer Res.">
        <title>Identification of fibroblast growth factor-5 as an overexpressed antigen in multiple human adenocarcinomas.</title>
        <authorList>
            <person name="Hanada K.-I."/>
            <person name="Perry-Lalley D.M."/>
            <person name="Ohnmacht G.A."/>
            <person name="Bettinotti M.P."/>
            <person name="Yang J.C."/>
        </authorList>
    </citation>
    <scope>NUCLEOTIDE SEQUENCE [MRNA] (ISOFORM LONG)</scope>
</reference>
<reference key="6">
    <citation type="submission" date="2005-08" db="EMBL/GenBank/DDBJ databases">
        <authorList>
            <consortium name="NIEHS SNPs program"/>
        </authorList>
    </citation>
    <scope>NUCLEOTIDE SEQUENCE [GENOMIC DNA]</scope>
    <scope>VARIANT VAL-54</scope>
</reference>
<reference key="7">
    <citation type="journal article" date="2004" name="Nat. Genet.">
        <title>Complete sequencing and characterization of 21,243 full-length human cDNAs.</title>
        <authorList>
            <person name="Ota T."/>
            <person name="Suzuki Y."/>
            <person name="Nishikawa T."/>
            <person name="Otsuki T."/>
            <person name="Sugiyama T."/>
            <person name="Irie R."/>
            <person name="Wakamatsu A."/>
            <person name="Hayashi K."/>
            <person name="Sato H."/>
            <person name="Nagai K."/>
            <person name="Kimura K."/>
            <person name="Makita H."/>
            <person name="Sekine M."/>
            <person name="Obayashi M."/>
            <person name="Nishi T."/>
            <person name="Shibahara T."/>
            <person name="Tanaka T."/>
            <person name="Ishii S."/>
            <person name="Yamamoto J."/>
            <person name="Saito K."/>
            <person name="Kawai Y."/>
            <person name="Isono Y."/>
            <person name="Nakamura Y."/>
            <person name="Nagahari K."/>
            <person name="Murakami K."/>
            <person name="Yasuda T."/>
            <person name="Iwayanagi T."/>
            <person name="Wagatsuma M."/>
            <person name="Shiratori A."/>
            <person name="Sudo H."/>
            <person name="Hosoiri T."/>
            <person name="Kaku Y."/>
            <person name="Kodaira H."/>
            <person name="Kondo H."/>
            <person name="Sugawara M."/>
            <person name="Takahashi M."/>
            <person name="Kanda K."/>
            <person name="Yokoi T."/>
            <person name="Furuya T."/>
            <person name="Kikkawa E."/>
            <person name="Omura Y."/>
            <person name="Abe K."/>
            <person name="Kamihara K."/>
            <person name="Katsuta N."/>
            <person name="Sato K."/>
            <person name="Tanikawa M."/>
            <person name="Yamazaki M."/>
            <person name="Ninomiya K."/>
            <person name="Ishibashi T."/>
            <person name="Yamashita H."/>
            <person name="Murakawa K."/>
            <person name="Fujimori K."/>
            <person name="Tanai H."/>
            <person name="Kimata M."/>
            <person name="Watanabe M."/>
            <person name="Hiraoka S."/>
            <person name="Chiba Y."/>
            <person name="Ishida S."/>
            <person name="Ono Y."/>
            <person name="Takiguchi S."/>
            <person name="Watanabe S."/>
            <person name="Yosida M."/>
            <person name="Hotuta T."/>
            <person name="Kusano J."/>
            <person name="Kanehori K."/>
            <person name="Takahashi-Fujii A."/>
            <person name="Hara H."/>
            <person name="Tanase T.-O."/>
            <person name="Nomura Y."/>
            <person name="Togiya S."/>
            <person name="Komai F."/>
            <person name="Hara R."/>
            <person name="Takeuchi K."/>
            <person name="Arita M."/>
            <person name="Imose N."/>
            <person name="Musashino K."/>
            <person name="Yuuki H."/>
            <person name="Oshima A."/>
            <person name="Sasaki N."/>
            <person name="Aotsuka S."/>
            <person name="Yoshikawa Y."/>
            <person name="Matsunawa H."/>
            <person name="Ichihara T."/>
            <person name="Shiohata N."/>
            <person name="Sano S."/>
            <person name="Moriya S."/>
            <person name="Momiyama H."/>
            <person name="Satoh N."/>
            <person name="Takami S."/>
            <person name="Terashima Y."/>
            <person name="Suzuki O."/>
            <person name="Nakagawa S."/>
            <person name="Senoh A."/>
            <person name="Mizoguchi H."/>
            <person name="Goto Y."/>
            <person name="Shimizu F."/>
            <person name="Wakebe H."/>
            <person name="Hishigaki H."/>
            <person name="Watanabe T."/>
            <person name="Sugiyama A."/>
            <person name="Takemoto M."/>
            <person name="Kawakami B."/>
            <person name="Yamazaki M."/>
            <person name="Watanabe K."/>
            <person name="Kumagai A."/>
            <person name="Itakura S."/>
            <person name="Fukuzumi Y."/>
            <person name="Fujimori Y."/>
            <person name="Komiyama M."/>
            <person name="Tashiro H."/>
            <person name="Tanigami A."/>
            <person name="Fujiwara T."/>
            <person name="Ono T."/>
            <person name="Yamada K."/>
            <person name="Fujii Y."/>
            <person name="Ozaki K."/>
            <person name="Hirao M."/>
            <person name="Ohmori Y."/>
            <person name="Kawabata A."/>
            <person name="Hikiji T."/>
            <person name="Kobatake N."/>
            <person name="Inagaki H."/>
            <person name="Ikema Y."/>
            <person name="Okamoto S."/>
            <person name="Okitani R."/>
            <person name="Kawakami T."/>
            <person name="Noguchi S."/>
            <person name="Itoh T."/>
            <person name="Shigeta K."/>
            <person name="Senba T."/>
            <person name="Matsumura K."/>
            <person name="Nakajima Y."/>
            <person name="Mizuno T."/>
            <person name="Morinaga M."/>
            <person name="Sasaki M."/>
            <person name="Togashi T."/>
            <person name="Oyama M."/>
            <person name="Hata H."/>
            <person name="Watanabe M."/>
            <person name="Komatsu T."/>
            <person name="Mizushima-Sugano J."/>
            <person name="Satoh T."/>
            <person name="Shirai Y."/>
            <person name="Takahashi Y."/>
            <person name="Nakagawa K."/>
            <person name="Okumura K."/>
            <person name="Nagase T."/>
            <person name="Nomura N."/>
            <person name="Kikuchi H."/>
            <person name="Masuho Y."/>
            <person name="Yamashita R."/>
            <person name="Nakai K."/>
            <person name="Yada T."/>
            <person name="Nakamura Y."/>
            <person name="Ohara O."/>
            <person name="Isogai T."/>
            <person name="Sugano S."/>
        </authorList>
    </citation>
    <scope>NUCLEOTIDE SEQUENCE [LARGE SCALE MRNA] (ISOFORMS SHORT AND LONG)</scope>
    <source>
        <tissue>Cerebellum</tissue>
    </source>
</reference>
<reference key="8">
    <citation type="submission" date="2005-07" db="EMBL/GenBank/DDBJ databases">
        <authorList>
            <person name="Mural R.J."/>
            <person name="Istrail S."/>
            <person name="Sutton G.G."/>
            <person name="Florea L."/>
            <person name="Halpern A.L."/>
            <person name="Mobarry C.M."/>
            <person name="Lippert R."/>
            <person name="Walenz B."/>
            <person name="Shatkay H."/>
            <person name="Dew I."/>
            <person name="Miller J.R."/>
            <person name="Flanigan M.J."/>
            <person name="Edwards N.J."/>
            <person name="Bolanos R."/>
            <person name="Fasulo D."/>
            <person name="Halldorsson B.V."/>
            <person name="Hannenhalli S."/>
            <person name="Turner R."/>
            <person name="Yooseph S."/>
            <person name="Lu F."/>
            <person name="Nusskern D.R."/>
            <person name="Shue B.C."/>
            <person name="Zheng X.H."/>
            <person name="Zhong F."/>
            <person name="Delcher A.L."/>
            <person name="Huson D.H."/>
            <person name="Kravitz S.A."/>
            <person name="Mouchard L."/>
            <person name="Reinert K."/>
            <person name="Remington K.A."/>
            <person name="Clark A.G."/>
            <person name="Waterman M.S."/>
            <person name="Eichler E.E."/>
            <person name="Adams M.D."/>
            <person name="Hunkapiller M.W."/>
            <person name="Myers E.W."/>
            <person name="Venter J.C."/>
        </authorList>
    </citation>
    <scope>NUCLEOTIDE SEQUENCE [LARGE SCALE GENOMIC DNA]</scope>
</reference>
<reference key="9">
    <citation type="journal article" date="2004" name="Genome Res.">
        <title>The status, quality, and expansion of the NIH full-length cDNA project: the Mammalian Gene Collection (MGC).</title>
        <authorList>
            <consortium name="The MGC Project Team"/>
        </authorList>
    </citation>
    <scope>NUCLEOTIDE SEQUENCE [LARGE SCALE MRNA] (ISOFORM LONG)</scope>
    <source>
        <tissue>Lung</tissue>
    </source>
</reference>
<reference key="10">
    <citation type="journal article" date="1996" name="J. Biol. Chem.">
        <title>Receptor specificity of the fibroblast growth factor family.</title>
        <authorList>
            <person name="Ornitz D.M."/>
            <person name="Xu J."/>
            <person name="Colvin J.S."/>
            <person name="McEwen D.G."/>
            <person name="MacArthur C.A."/>
            <person name="Coulier F."/>
            <person name="Gao G."/>
            <person name="Goldfarb M."/>
        </authorList>
    </citation>
    <scope>INTERACTION WITH FGFR1 AND FGFR2</scope>
    <scope>FUNCTION IN CELL PROLIFERATION</scope>
</reference>
<reference key="11">
    <citation type="journal article" date="2010" name="Nat. Rev. Cancer">
        <title>Fibroblast growth factor signalling: from development to cancer.</title>
        <authorList>
            <person name="Turner N."/>
            <person name="Grose R."/>
        </authorList>
    </citation>
    <scope>REVIEW</scope>
</reference>
<reference key="12">
    <citation type="journal article" date="2014" name="Proc. Natl. Acad. Sci. U.S.A.">
        <title>FGF5 is a crucial regulator of hair length in humans.</title>
        <authorList>
            <person name="Higgins C.A."/>
            <person name="Petukhova L."/>
            <person name="Harel S."/>
            <person name="Ho Y.Y."/>
            <person name="Drill E."/>
            <person name="Shapiro L."/>
            <person name="Wajid M."/>
            <person name="Christiano A.M."/>
        </authorList>
    </citation>
    <scope>INVOLVEMENT IN TCMGLY</scope>
    <scope>VARIANT TCMGLY HIS-174</scope>
</reference>
<sequence length="268" mass="29551">MSLSFLLLLFFSHLILSAWAHGEKRLAPKGQPGPAATDRNPRGSSSRQSSSSAMSSSSASSSPAASLGSQGSGLEQSSFQWSPSGRRTGSLYCRVGIGFHLQIYPDGKVNGSHEANMLSVLEIFAVSQGIVGIRGVFSNKFLAMSKKGKLHASAKFTDDCKFRERFQENSYNTYASAIHRTEKTGREWYVALNKRGKAKRGCSPRVKPQHISTHFLPRFKQSEQPELSFTVTVPEKKKPPSPIKPKIPLSAPRKNTNSVKYRLKFRFG</sequence>